<sequence length="72" mass="8637">MEKSFYRYLLRFRHGYEEDPVVRFANGAYDDHGFPKGSADYEELSGYLELNGDYLESMVIFDELWEQFLHET</sequence>
<gene>
    <name type="ordered locus">GTNG_1419</name>
</gene>
<proteinExistence type="inferred from homology"/>
<reference key="1">
    <citation type="journal article" date="2007" name="Proc. Natl. Acad. Sci. U.S.A.">
        <title>Genome and proteome of long-chain alkane degrading Geobacillus thermodenitrificans NG80-2 isolated from a deep-subsurface oil reservoir.</title>
        <authorList>
            <person name="Feng L."/>
            <person name="Wang W."/>
            <person name="Cheng J."/>
            <person name="Ren Y."/>
            <person name="Zhao G."/>
            <person name="Gao C."/>
            <person name="Tang Y."/>
            <person name="Liu X."/>
            <person name="Han W."/>
            <person name="Peng X."/>
            <person name="Liu R."/>
            <person name="Wang L."/>
        </authorList>
    </citation>
    <scope>NUCLEOTIDE SEQUENCE [LARGE SCALE GENOMIC DNA]</scope>
    <source>
        <strain>NG80-2</strain>
    </source>
</reference>
<organism>
    <name type="scientific">Geobacillus thermodenitrificans (strain NG80-2)</name>
    <dbReference type="NCBI Taxonomy" id="420246"/>
    <lineage>
        <taxon>Bacteria</taxon>
        <taxon>Bacillati</taxon>
        <taxon>Bacillota</taxon>
        <taxon>Bacilli</taxon>
        <taxon>Bacillales</taxon>
        <taxon>Anoxybacillaceae</taxon>
        <taxon>Geobacillus</taxon>
    </lineage>
</organism>
<comment type="similarity">
    <text evidence="1">Belongs to the UPF0346 family.</text>
</comment>
<comment type="sequence caution" evidence="2">
    <conflict type="erroneous initiation">
        <sequence resource="EMBL-CDS" id="ABO66789"/>
    </conflict>
</comment>
<dbReference type="EMBL" id="CP000557">
    <property type="protein sequence ID" value="ABO66789.1"/>
    <property type="status" value="ALT_INIT"/>
    <property type="molecule type" value="Genomic_DNA"/>
</dbReference>
<dbReference type="RefSeq" id="WP_008879290.1">
    <property type="nucleotide sequence ID" value="NC_009328.1"/>
</dbReference>
<dbReference type="SMR" id="A4IN85"/>
<dbReference type="KEGG" id="gtn:GTNG_1419"/>
<dbReference type="eggNOG" id="COG4479">
    <property type="taxonomic scope" value="Bacteria"/>
</dbReference>
<dbReference type="HOGENOM" id="CLU_2167360_0_0_9"/>
<dbReference type="Proteomes" id="UP000001578">
    <property type="component" value="Chromosome"/>
</dbReference>
<dbReference type="Gene3D" id="1.10.150.260">
    <property type="entry name" value="YozE SAM-like"/>
    <property type="match status" value="1"/>
</dbReference>
<dbReference type="HAMAP" id="MF_01538">
    <property type="entry name" value="UPF0346"/>
    <property type="match status" value="1"/>
</dbReference>
<dbReference type="InterPro" id="IPR010673">
    <property type="entry name" value="UPF0346"/>
</dbReference>
<dbReference type="InterPro" id="IPR023089">
    <property type="entry name" value="YozE_SAM-like"/>
</dbReference>
<dbReference type="InterPro" id="IPR036806">
    <property type="entry name" value="YozE_SAM-like_sf"/>
</dbReference>
<dbReference type="NCBIfam" id="NF010193">
    <property type="entry name" value="PRK13672.1"/>
    <property type="match status" value="1"/>
</dbReference>
<dbReference type="Pfam" id="PF06855">
    <property type="entry name" value="YozE_SAM_like"/>
    <property type="match status" value="1"/>
</dbReference>
<dbReference type="PIRSF" id="PIRSF037262">
    <property type="entry name" value="UCP037262"/>
    <property type="match status" value="1"/>
</dbReference>
<dbReference type="SUPFAM" id="SSF140652">
    <property type="entry name" value="YozE-like"/>
    <property type="match status" value="1"/>
</dbReference>
<feature type="chain" id="PRO_0000292793" description="UPF0346 protein GTNG_1419">
    <location>
        <begin position="1"/>
        <end position="72"/>
    </location>
</feature>
<evidence type="ECO:0000255" key="1">
    <source>
        <dbReference type="HAMAP-Rule" id="MF_01538"/>
    </source>
</evidence>
<evidence type="ECO:0000305" key="2"/>
<protein>
    <recommendedName>
        <fullName evidence="1">UPF0346 protein GTNG_1419</fullName>
    </recommendedName>
</protein>
<name>Y1419_GEOTN</name>
<accession>A4IN85</accession>